<feature type="initiator methionine" description="Removed" evidence="10 12">
    <location>
        <position position="1"/>
    </location>
</feature>
<feature type="chain" id="PRO_0000211966" description="Creatine kinase B-type">
    <location>
        <begin position="2"/>
        <end position="381"/>
    </location>
</feature>
<feature type="domain" description="Phosphagen kinase N-terminal" evidence="3">
    <location>
        <begin position="11"/>
        <end position="98"/>
    </location>
</feature>
<feature type="domain" description="Phosphagen kinase C-terminal" evidence="4">
    <location>
        <begin position="125"/>
        <end position="367"/>
    </location>
</feature>
<feature type="region of interest" description="Disordered" evidence="6">
    <location>
        <begin position="96"/>
        <end position="122"/>
    </location>
</feature>
<feature type="region of interest" description="Internal MTS-like signal" evidence="2">
    <location>
        <begin position="130"/>
        <end position="138"/>
    </location>
</feature>
<feature type="compositionally biased region" description="Basic and acidic residues" evidence="6">
    <location>
        <begin position="96"/>
        <end position="110"/>
    </location>
</feature>
<feature type="binding site" evidence="8">
    <location>
        <position position="72"/>
    </location>
    <ligand>
        <name>creatine</name>
        <dbReference type="ChEBI" id="CHEBI:57947"/>
    </ligand>
</feature>
<feature type="binding site" evidence="8">
    <location>
        <begin position="128"/>
        <end position="132"/>
    </location>
    <ligand>
        <name>ATP</name>
        <dbReference type="ChEBI" id="CHEBI:30616"/>
    </ligand>
</feature>
<feature type="binding site" evidence="8">
    <location>
        <position position="130"/>
    </location>
    <ligand>
        <name>ATP</name>
        <dbReference type="ChEBI" id="CHEBI:30616"/>
    </ligand>
</feature>
<feature type="binding site" evidence="8">
    <location>
        <position position="132"/>
    </location>
    <ligand>
        <name>ATP</name>
        <dbReference type="ChEBI" id="CHEBI:30616"/>
    </ligand>
</feature>
<feature type="binding site" evidence="8">
    <location>
        <position position="191"/>
    </location>
    <ligand>
        <name>ATP</name>
        <dbReference type="ChEBI" id="CHEBI:30616"/>
    </ligand>
</feature>
<feature type="binding site" evidence="8">
    <location>
        <position position="232"/>
    </location>
    <ligand>
        <name>creatine</name>
        <dbReference type="ChEBI" id="CHEBI:57947"/>
    </ligand>
</feature>
<feature type="binding site" evidence="8">
    <location>
        <position position="236"/>
    </location>
    <ligand>
        <name>ATP</name>
        <dbReference type="ChEBI" id="CHEBI:30616"/>
    </ligand>
</feature>
<feature type="binding site" evidence="8">
    <location>
        <position position="285"/>
    </location>
    <ligand>
        <name>creatine</name>
        <dbReference type="ChEBI" id="CHEBI:57947"/>
    </ligand>
</feature>
<feature type="binding site" evidence="8">
    <location>
        <position position="292"/>
    </location>
    <ligand>
        <name>ATP</name>
        <dbReference type="ChEBI" id="CHEBI:30616"/>
    </ligand>
</feature>
<feature type="binding site" evidence="8">
    <location>
        <begin position="320"/>
        <end position="325"/>
    </location>
    <ligand>
        <name>ATP</name>
        <dbReference type="ChEBI" id="CHEBI:30616"/>
    </ligand>
</feature>
<feature type="binding site" evidence="8">
    <location>
        <position position="320"/>
    </location>
    <ligand>
        <name>ATP</name>
        <dbReference type="ChEBI" id="CHEBI:30616"/>
    </ligand>
</feature>
<feature type="binding site" evidence="8">
    <location>
        <position position="335"/>
    </location>
    <ligand>
        <name>ATP</name>
        <dbReference type="ChEBI" id="CHEBI:30616"/>
    </ligand>
</feature>
<feature type="modified residue" description="Phosphoserine" evidence="20 21">
    <location>
        <position position="4"/>
    </location>
</feature>
<feature type="modified residue" description="Phosphothreonine" evidence="19 21">
    <location>
        <position position="35"/>
    </location>
</feature>
<feature type="modified residue" description="Phosphotyrosine" evidence="2">
    <location>
        <position position="125"/>
    </location>
</feature>
<feature type="modified residue" description="Phosphoserine" evidence="19">
    <location>
        <position position="199"/>
    </location>
</feature>
<feature type="modified residue" description="3'-nitrotyrosine" evidence="2">
    <location>
        <position position="269"/>
    </location>
</feature>
<feature type="modified residue" description="Phosphoserine" evidence="1">
    <location>
        <position position="309"/>
    </location>
</feature>
<feature type="modified residue" description="Phosphothreonine" evidence="2">
    <location>
        <position position="322"/>
    </location>
</feature>
<feature type="cross-link" description="Glycyl lysine isopeptide (Lys-Gly) (interchain with G-Cter in ubiquitin)" evidence="9">
    <location>
        <position position="45"/>
    </location>
</feature>
<feature type="cross-link" description="Glycyl lysine isopeptide (Lys-Gly) (interchain with G-Cter in ubiquitin)" evidence="9">
    <location>
        <position position="101"/>
    </location>
</feature>
<feature type="cross-link" description="Glycyl lysine isopeptide (Lys-Gly) (interchain with G-Cter in ubiquitin)" evidence="9">
    <location>
        <position position="107"/>
    </location>
</feature>
<feature type="cross-link" description="Glycyl lysine isopeptide (Lys-Gly) (interchain with G-Cter in ubiquitin)" evidence="9">
    <location>
        <position position="381"/>
    </location>
</feature>
<feature type="sequence variant" id="VAR_025838" description="In dbSNP:rs36002620." evidence="13">
    <original>K</original>
    <variation>R</variation>
    <location>
        <position position="177"/>
    </location>
</feature>
<feature type="sequence variant" id="VAR_025839" description="In dbSNP:rs35156510." evidence="13">
    <original>S</original>
    <variation>L</variation>
    <location>
        <position position="309"/>
    </location>
</feature>
<feature type="sequence variant" id="VAR_049674" description="In dbSNP:rs12505.">
    <original>L</original>
    <variation>F</variation>
    <location>
        <position position="360"/>
    </location>
</feature>
<feature type="mutagenesis site" description="Complete loss of activity." evidence="11">
    <original>C</original>
    <variation>S</variation>
    <variation>Y</variation>
    <location>
        <position position="283"/>
    </location>
</feature>
<feature type="mutagenesis site" description="Complete loss of activity." evidence="11">
    <original>R</original>
    <variation>H</variation>
    <variation>L</variation>
    <variation>Q</variation>
    <location>
        <position position="292"/>
    </location>
</feature>
<feature type="mutagenesis site" description="42% of wild-type activity." evidence="11">
    <original>R</original>
    <variation>K</variation>
    <location>
        <position position="292"/>
    </location>
</feature>
<feature type="mutagenesis site" description="No change in activity." evidence="11">
    <original>D</original>
    <variation>E</variation>
    <location>
        <position position="340"/>
    </location>
</feature>
<feature type="sequence conflict" description="In Ref. 1; AAA76851." evidence="16" ref="1">
    <original>EL</original>
    <variation>DV</variation>
    <location>
        <begin position="41"/>
        <end position="42"/>
    </location>
</feature>
<feature type="sequence conflict" description="In Ref. 3; AAA76850 and 10; AAA52024." evidence="16" ref="3 10">
    <original>D</original>
    <variation>G</variation>
    <location>
        <position position="78"/>
    </location>
</feature>
<feature type="sequence conflict" description="In Ref. 1; AAA76851." evidence="16" ref="1">
    <original>GG</original>
    <variation>RR</variation>
    <location>
        <begin position="98"/>
        <end position="99"/>
    </location>
</feature>
<feature type="sequence conflict" description="In Ref. 1; AAA76851." evidence="16" ref="1">
    <original>EH</original>
    <variation>DD</variation>
    <location>
        <begin position="105"/>
        <end position="106"/>
    </location>
</feature>
<feature type="sequence conflict" description="In Ref. 3; AAA76850." evidence="16" ref="3">
    <original>R</original>
    <variation>G</variation>
    <location>
        <position position="130"/>
    </location>
</feature>
<feature type="sequence conflict" description="In Ref. 1; AAA76851." evidence="16" ref="1">
    <original>R</original>
    <variation>A</variation>
    <location>
        <position position="132"/>
    </location>
</feature>
<feature type="sequence conflict" description="In Ref. 6; CAG47064." evidence="16" ref="6">
    <original>P</original>
    <variation>Q</variation>
    <location>
        <position position="144"/>
    </location>
</feature>
<feature type="sequence conflict" description="In Ref. 2; AAC31758." evidence="16" ref="2">
    <original>L</original>
    <variation>S</variation>
    <location>
        <position position="203"/>
    </location>
</feature>
<feature type="sequence conflict" description="In Ref. 1; AAA76851." evidence="16" ref="1">
    <original>RG</original>
    <variation>AR</variation>
    <location>
        <begin position="215"/>
        <end position="216"/>
    </location>
</feature>
<feature type="sequence conflict" description="In Ref. 1; AAA76851." evidence="16" ref="1">
    <original>H</original>
    <variation>D</variation>
    <location>
        <position position="296"/>
    </location>
</feature>
<feature type="sequence conflict" description="In Ref. 5; BAG35211." evidence="16" ref="5">
    <original>K</original>
    <variation>R</variation>
    <location>
        <position position="358"/>
    </location>
</feature>
<feature type="helix" evidence="22">
    <location>
        <begin position="7"/>
        <end position="11"/>
    </location>
</feature>
<feature type="helix" evidence="22">
    <location>
        <begin position="16"/>
        <end position="19"/>
    </location>
</feature>
<feature type="helix" evidence="22">
    <location>
        <begin position="29"/>
        <end position="33"/>
    </location>
</feature>
<feature type="helix" evidence="22">
    <location>
        <begin position="36"/>
        <end position="42"/>
    </location>
</feature>
<feature type="helix" evidence="22">
    <location>
        <begin position="53"/>
        <end position="62"/>
    </location>
</feature>
<feature type="strand" evidence="22">
    <location>
        <begin position="67"/>
        <end position="69"/>
    </location>
</feature>
<feature type="helix" evidence="22">
    <location>
        <begin position="81"/>
        <end position="84"/>
    </location>
</feature>
<feature type="helix" evidence="22">
    <location>
        <begin position="86"/>
        <end position="96"/>
    </location>
</feature>
<feature type="turn" evidence="23">
    <location>
        <begin position="97"/>
        <end position="99"/>
    </location>
</feature>
<feature type="helix" evidence="22">
    <location>
        <begin position="112"/>
        <end position="114"/>
    </location>
</feature>
<feature type="turn" evidence="22">
    <location>
        <begin position="123"/>
        <end position="125"/>
    </location>
</feature>
<feature type="strand" evidence="22">
    <location>
        <begin position="126"/>
        <end position="135"/>
    </location>
</feature>
<feature type="turn" evidence="22">
    <location>
        <begin position="143"/>
        <end position="145"/>
    </location>
</feature>
<feature type="helix" evidence="22">
    <location>
        <begin position="148"/>
        <end position="162"/>
    </location>
</feature>
<feature type="helix" evidence="22">
    <location>
        <begin position="167"/>
        <end position="169"/>
    </location>
</feature>
<feature type="strand" evidence="22">
    <location>
        <begin position="171"/>
        <end position="176"/>
    </location>
</feature>
<feature type="helix" evidence="22">
    <location>
        <begin position="181"/>
        <end position="189"/>
    </location>
</feature>
<feature type="helix" evidence="22">
    <location>
        <begin position="200"/>
        <end position="203"/>
    </location>
</feature>
<feature type="turn" evidence="22">
    <location>
        <begin position="204"/>
        <end position="214"/>
    </location>
</feature>
<feature type="strand" evidence="22">
    <location>
        <begin position="216"/>
        <end position="220"/>
    </location>
</feature>
<feature type="strand" evidence="22">
    <location>
        <begin position="223"/>
        <end position="244"/>
    </location>
</feature>
<feature type="helix" evidence="22">
    <location>
        <begin position="246"/>
        <end position="266"/>
    </location>
</feature>
<feature type="turn" evidence="22">
    <location>
        <begin position="275"/>
        <end position="277"/>
    </location>
</feature>
<feature type="helix" evidence="22">
    <location>
        <begin position="284"/>
        <end position="286"/>
    </location>
</feature>
<feature type="strand" evidence="22">
    <location>
        <begin position="292"/>
        <end position="298"/>
    </location>
</feature>
<feature type="helix" evidence="22">
    <location>
        <begin position="300"/>
        <end position="303"/>
    </location>
</feature>
<feature type="helix" evidence="22">
    <location>
        <begin position="308"/>
        <end position="314"/>
    </location>
</feature>
<feature type="strand" evidence="22">
    <location>
        <begin position="317"/>
        <end position="321"/>
    </location>
</feature>
<feature type="helix" evidence="22">
    <location>
        <begin position="325"/>
        <end position="330"/>
    </location>
</feature>
<feature type="strand" evidence="22">
    <location>
        <begin position="333"/>
        <end position="338"/>
    </location>
</feature>
<feature type="strand" evidence="22">
    <location>
        <begin position="342"/>
        <end position="344"/>
    </location>
</feature>
<feature type="helix" evidence="22">
    <location>
        <begin position="346"/>
        <end position="368"/>
    </location>
</feature>
<feature type="helix" evidence="22">
    <location>
        <begin position="374"/>
        <end position="376"/>
    </location>
</feature>
<protein>
    <recommendedName>
        <fullName evidence="16">Creatine kinase B-type</fullName>
        <ecNumber evidence="11">2.7.3.2</ecNumber>
    </recommendedName>
    <alternativeName>
        <fullName evidence="14">Brain creatine kinase</fullName>
        <shortName>B-CK</shortName>
    </alternativeName>
    <alternativeName>
        <fullName evidence="15">Creatine kinase B chain</fullName>
    </alternativeName>
    <alternativeName>
        <fullName>Creatine phosphokinase B-type</fullName>
        <shortName>CPK-B</shortName>
    </alternativeName>
</protein>
<evidence type="ECO:0000250" key="1">
    <source>
        <dbReference type="UniProtKB" id="P07335"/>
    </source>
</evidence>
<evidence type="ECO:0000250" key="2">
    <source>
        <dbReference type="UniProtKB" id="Q04447"/>
    </source>
</evidence>
<evidence type="ECO:0000255" key="3">
    <source>
        <dbReference type="PROSITE-ProRule" id="PRU00842"/>
    </source>
</evidence>
<evidence type="ECO:0000255" key="4">
    <source>
        <dbReference type="PROSITE-ProRule" id="PRU00843"/>
    </source>
</evidence>
<evidence type="ECO:0000255" key="5">
    <source>
        <dbReference type="PROSITE-ProRule" id="PRU10029"/>
    </source>
</evidence>
<evidence type="ECO:0000256" key="6">
    <source>
        <dbReference type="SAM" id="MobiDB-lite"/>
    </source>
</evidence>
<evidence type="ECO:0000269" key="7">
    <source>
    </source>
</evidence>
<evidence type="ECO:0000269" key="8">
    <source>
    </source>
</evidence>
<evidence type="ECO:0000269" key="9">
    <source>
    </source>
</evidence>
<evidence type="ECO:0000269" key="10">
    <source>
    </source>
</evidence>
<evidence type="ECO:0000269" key="11">
    <source>
    </source>
</evidence>
<evidence type="ECO:0000269" key="12">
    <source ref="12"/>
</evidence>
<evidence type="ECO:0000269" key="13">
    <source ref="7"/>
</evidence>
<evidence type="ECO:0000303" key="14">
    <source>
    </source>
</evidence>
<evidence type="ECO:0000303" key="15">
    <source>
    </source>
</evidence>
<evidence type="ECO:0000305" key="16"/>
<evidence type="ECO:0000312" key="17">
    <source>
        <dbReference type="HGNC" id="HGNC:1991"/>
    </source>
</evidence>
<evidence type="ECO:0007744" key="18">
    <source>
        <dbReference type="PDB" id="6V9H"/>
    </source>
</evidence>
<evidence type="ECO:0007744" key="19">
    <source>
    </source>
</evidence>
<evidence type="ECO:0007744" key="20">
    <source>
    </source>
</evidence>
<evidence type="ECO:0007744" key="21">
    <source>
    </source>
</evidence>
<evidence type="ECO:0007829" key="22">
    <source>
        <dbReference type="PDB" id="3B6R"/>
    </source>
</evidence>
<evidence type="ECO:0007829" key="23">
    <source>
        <dbReference type="PDB" id="7TUN"/>
    </source>
</evidence>
<sequence>MPFSNSHNALKLRFPAEDEFPDLSAHNNHMAKVLTPELYAELRAKSTPSGFTLDDVIQTGVDNPGHPYIMTVGCVAGDEESYEVFKDLFDPIIEDRHGGYKPSDEHKTDLNPDNLQGGDDLDPNYVLSSRVRTGRSIRGFCLPPHCSRGERRAIEKLAVEALSSLDGDLAGRYYALKSMTEAEQQQLIDDHFLFDKPVSPLLLASGMARDWPDARGIWHNDNKTFLVWVNEEDHLRVISMQKGGNMKEVFTRFCTGLTQIETLFKSKDYEFMWNPHLGYILTCPSNLGTGLRAGVHIKLPNLGKHEKFSEVLKRLRLQKRGTGGVDTAAVGGVFDVSNADRLGFSEVELVQMVVDGVKLLIEMEQRLEQGQAIDDLMPAQK</sequence>
<name>KCRB_HUMAN</name>
<reference key="1">
    <citation type="journal article" date="1987" name="Biochem. Biophys. Res. Commun.">
        <title>Human creatine kinase: isolation and sequence analysis of cDNA clones for the B subunit, development of subunit specific probes and determination of gene copy number.</title>
        <authorList>
            <person name="Villarreal-Levy G."/>
            <person name="Ma T.S."/>
            <person name="Kerner S.A."/>
            <person name="Roberts R."/>
            <person name="Perryman M.B."/>
        </authorList>
    </citation>
    <scope>NUCLEOTIDE SEQUENCE [MRNA]</scope>
</reference>
<reference key="2">
    <citation type="journal article" date="1987" name="Genomics">
        <title>Structure and expression of the human creatine kinase B gene.</title>
        <authorList>
            <person name="Mariman E.C.M."/>
            <person name="Broers C.A.M."/>
            <person name="Claesen C.A.A."/>
            <person name="Tesser G.I."/>
            <person name="Wieringa B."/>
        </authorList>
    </citation>
    <scope>NUCLEOTIDE SEQUENCE [GENOMIC DNA]</scope>
</reference>
<reference key="3">
    <citation type="journal article" date="1987" name="J. Clin. Invest.">
        <title>Human creatine kinase-B complementary DNA. Nucleotide sequence, gene expression in lung cancer, and chromosomal assignment to two distinct loci.</title>
        <authorList>
            <person name="Kaye F.J."/>
            <person name="McBride O.W."/>
            <person name="Battey J.F."/>
            <person name="Gazder A.F."/>
            <person name="Sausville E.A."/>
        </authorList>
    </citation>
    <scope>NUCLEOTIDE SEQUENCE [MRNA]</scope>
</reference>
<reference key="4">
    <citation type="journal article" date="1989" name="Nucleic Acids Res.">
        <title>Complete nucleotide sequence of the human creatine kinase B gene.</title>
        <authorList>
            <person name="Mariman E.C.M."/>
            <person name="Schepens J.T.G."/>
            <person name="Wieringa B."/>
        </authorList>
    </citation>
    <scope>NUCLEOTIDE SEQUENCE [GENOMIC DNA]</scope>
    <source>
        <tissue>Brain</tissue>
    </source>
</reference>
<reference key="5">
    <citation type="journal article" date="2004" name="Nat. Genet.">
        <title>Complete sequencing and characterization of 21,243 full-length human cDNAs.</title>
        <authorList>
            <person name="Ota T."/>
            <person name="Suzuki Y."/>
            <person name="Nishikawa T."/>
            <person name="Otsuki T."/>
            <person name="Sugiyama T."/>
            <person name="Irie R."/>
            <person name="Wakamatsu A."/>
            <person name="Hayashi K."/>
            <person name="Sato H."/>
            <person name="Nagai K."/>
            <person name="Kimura K."/>
            <person name="Makita H."/>
            <person name="Sekine M."/>
            <person name="Obayashi M."/>
            <person name="Nishi T."/>
            <person name="Shibahara T."/>
            <person name="Tanaka T."/>
            <person name="Ishii S."/>
            <person name="Yamamoto J."/>
            <person name="Saito K."/>
            <person name="Kawai Y."/>
            <person name="Isono Y."/>
            <person name="Nakamura Y."/>
            <person name="Nagahari K."/>
            <person name="Murakami K."/>
            <person name="Yasuda T."/>
            <person name="Iwayanagi T."/>
            <person name="Wagatsuma M."/>
            <person name="Shiratori A."/>
            <person name="Sudo H."/>
            <person name="Hosoiri T."/>
            <person name="Kaku Y."/>
            <person name="Kodaira H."/>
            <person name="Kondo H."/>
            <person name="Sugawara M."/>
            <person name="Takahashi M."/>
            <person name="Kanda K."/>
            <person name="Yokoi T."/>
            <person name="Furuya T."/>
            <person name="Kikkawa E."/>
            <person name="Omura Y."/>
            <person name="Abe K."/>
            <person name="Kamihara K."/>
            <person name="Katsuta N."/>
            <person name="Sato K."/>
            <person name="Tanikawa M."/>
            <person name="Yamazaki M."/>
            <person name="Ninomiya K."/>
            <person name="Ishibashi T."/>
            <person name="Yamashita H."/>
            <person name="Murakawa K."/>
            <person name="Fujimori K."/>
            <person name="Tanai H."/>
            <person name="Kimata M."/>
            <person name="Watanabe M."/>
            <person name="Hiraoka S."/>
            <person name="Chiba Y."/>
            <person name="Ishida S."/>
            <person name="Ono Y."/>
            <person name="Takiguchi S."/>
            <person name="Watanabe S."/>
            <person name="Yosida M."/>
            <person name="Hotuta T."/>
            <person name="Kusano J."/>
            <person name="Kanehori K."/>
            <person name="Takahashi-Fujii A."/>
            <person name="Hara H."/>
            <person name="Tanase T.-O."/>
            <person name="Nomura Y."/>
            <person name="Togiya S."/>
            <person name="Komai F."/>
            <person name="Hara R."/>
            <person name="Takeuchi K."/>
            <person name="Arita M."/>
            <person name="Imose N."/>
            <person name="Musashino K."/>
            <person name="Yuuki H."/>
            <person name="Oshima A."/>
            <person name="Sasaki N."/>
            <person name="Aotsuka S."/>
            <person name="Yoshikawa Y."/>
            <person name="Matsunawa H."/>
            <person name="Ichihara T."/>
            <person name="Shiohata N."/>
            <person name="Sano S."/>
            <person name="Moriya S."/>
            <person name="Momiyama H."/>
            <person name="Satoh N."/>
            <person name="Takami S."/>
            <person name="Terashima Y."/>
            <person name="Suzuki O."/>
            <person name="Nakagawa S."/>
            <person name="Senoh A."/>
            <person name="Mizoguchi H."/>
            <person name="Goto Y."/>
            <person name="Shimizu F."/>
            <person name="Wakebe H."/>
            <person name="Hishigaki H."/>
            <person name="Watanabe T."/>
            <person name="Sugiyama A."/>
            <person name="Takemoto M."/>
            <person name="Kawakami B."/>
            <person name="Yamazaki M."/>
            <person name="Watanabe K."/>
            <person name="Kumagai A."/>
            <person name="Itakura S."/>
            <person name="Fukuzumi Y."/>
            <person name="Fujimori Y."/>
            <person name="Komiyama M."/>
            <person name="Tashiro H."/>
            <person name="Tanigami A."/>
            <person name="Fujiwara T."/>
            <person name="Ono T."/>
            <person name="Yamada K."/>
            <person name="Fujii Y."/>
            <person name="Ozaki K."/>
            <person name="Hirao M."/>
            <person name="Ohmori Y."/>
            <person name="Kawabata A."/>
            <person name="Hikiji T."/>
            <person name="Kobatake N."/>
            <person name="Inagaki H."/>
            <person name="Ikema Y."/>
            <person name="Okamoto S."/>
            <person name="Okitani R."/>
            <person name="Kawakami T."/>
            <person name="Noguchi S."/>
            <person name="Itoh T."/>
            <person name="Shigeta K."/>
            <person name="Senba T."/>
            <person name="Matsumura K."/>
            <person name="Nakajima Y."/>
            <person name="Mizuno T."/>
            <person name="Morinaga M."/>
            <person name="Sasaki M."/>
            <person name="Togashi T."/>
            <person name="Oyama M."/>
            <person name="Hata H."/>
            <person name="Watanabe M."/>
            <person name="Komatsu T."/>
            <person name="Mizushima-Sugano J."/>
            <person name="Satoh T."/>
            <person name="Shirai Y."/>
            <person name="Takahashi Y."/>
            <person name="Nakagawa K."/>
            <person name="Okumura K."/>
            <person name="Nagase T."/>
            <person name="Nomura N."/>
            <person name="Kikuchi H."/>
            <person name="Masuho Y."/>
            <person name="Yamashita R."/>
            <person name="Nakai K."/>
            <person name="Yada T."/>
            <person name="Nakamura Y."/>
            <person name="Ohara O."/>
            <person name="Isogai T."/>
            <person name="Sugano S."/>
        </authorList>
    </citation>
    <scope>NUCLEOTIDE SEQUENCE [LARGE SCALE MRNA]</scope>
    <source>
        <tissue>Cerebellum</tissue>
        <tissue>Subthalamic nucleus</tissue>
    </source>
</reference>
<reference key="6">
    <citation type="submission" date="2004-06" db="EMBL/GenBank/DDBJ databases">
        <title>Cloning of human full open reading frames in Gateway(TM) system entry vector (pDONR201).</title>
        <authorList>
            <person name="Halleck A."/>
            <person name="Ebert L."/>
            <person name="Mkoundinya M."/>
            <person name="Schick M."/>
            <person name="Eisenstein S."/>
            <person name="Neubert P."/>
            <person name="Kstrang K."/>
            <person name="Schatten R."/>
            <person name="Shen B."/>
            <person name="Henze S."/>
            <person name="Mar W."/>
            <person name="Korn B."/>
            <person name="Zuo D."/>
            <person name="Hu Y."/>
            <person name="LaBaer J."/>
        </authorList>
    </citation>
    <scope>NUCLEOTIDE SEQUENCE [LARGE SCALE MRNA]</scope>
</reference>
<reference key="7">
    <citation type="submission" date="2005-12" db="EMBL/GenBank/DDBJ databases">
        <authorList>
            <consortium name="NIEHS SNPs program"/>
        </authorList>
    </citation>
    <scope>NUCLEOTIDE SEQUENCE [GENOMIC DNA]</scope>
    <scope>VARIANTS ARG-177 AND LEU-309</scope>
</reference>
<reference key="8">
    <citation type="submission" date="2005-07" db="EMBL/GenBank/DDBJ databases">
        <authorList>
            <person name="Mural R.J."/>
            <person name="Istrail S."/>
            <person name="Sutton G.G."/>
            <person name="Florea L."/>
            <person name="Halpern A.L."/>
            <person name="Mobarry C.M."/>
            <person name="Lippert R."/>
            <person name="Walenz B."/>
            <person name="Shatkay H."/>
            <person name="Dew I."/>
            <person name="Miller J.R."/>
            <person name="Flanigan M.J."/>
            <person name="Edwards N.J."/>
            <person name="Bolanos R."/>
            <person name="Fasulo D."/>
            <person name="Halldorsson B.V."/>
            <person name="Hannenhalli S."/>
            <person name="Turner R."/>
            <person name="Yooseph S."/>
            <person name="Lu F."/>
            <person name="Nusskern D.R."/>
            <person name="Shue B.C."/>
            <person name="Zheng X.H."/>
            <person name="Zhong F."/>
            <person name="Delcher A.L."/>
            <person name="Huson D.H."/>
            <person name="Kravitz S.A."/>
            <person name="Mouchard L."/>
            <person name="Reinert K."/>
            <person name="Remington K.A."/>
            <person name="Clark A.G."/>
            <person name="Waterman M.S."/>
            <person name="Eichler E.E."/>
            <person name="Adams M.D."/>
            <person name="Hunkapiller M.W."/>
            <person name="Myers E.W."/>
            <person name="Venter J.C."/>
        </authorList>
    </citation>
    <scope>NUCLEOTIDE SEQUENCE [LARGE SCALE GENOMIC DNA]</scope>
</reference>
<reference key="9">
    <citation type="journal article" date="2004" name="Genome Res.">
        <title>The status, quality, and expansion of the NIH full-length cDNA project: the Mammalian Gene Collection (MGC).</title>
        <authorList>
            <consortium name="The MGC Project Team"/>
        </authorList>
    </citation>
    <scope>NUCLEOTIDE SEQUENCE [LARGE SCALE MRNA]</scope>
    <source>
        <tissue>Brain</tissue>
        <tissue>Eye</tissue>
        <tissue>Lung</tissue>
    </source>
</reference>
<reference key="10">
    <citation type="journal article" date="1988" name="J. Biol. Chem.">
        <title>Isolation of a functional human gene for brain creatine kinase.</title>
        <authorList>
            <person name="Daouk G.H."/>
            <person name="Kaddurah-Daouk R."/>
            <person name="Putney S."/>
            <person name="Kingston R."/>
            <person name="Schimmel P."/>
        </authorList>
    </citation>
    <scope>NUCLEOTIDE SEQUENCE [GENOMIC DNA] OF 1-97</scope>
</reference>
<reference key="11">
    <citation type="journal article" date="1995" name="Lab. Invest.">
        <title>Protein analysis of human maculae in relation to age-related maculopathy.</title>
        <authorList>
            <person name="Kliffen M."/>
            <person name="de Jong P.T.V.M."/>
            <person name="Luider T.M."/>
        </authorList>
    </citation>
    <scope>PROTEIN SEQUENCE OF 2-22</scope>
    <source>
        <tissue>Eye</tissue>
    </source>
</reference>
<reference key="12">
    <citation type="submission" date="2008-03" db="UniProtKB">
        <authorList>
            <person name="Bienvenut W.V."/>
            <person name="Heiserich L."/>
            <person name="Gottlieb E."/>
        </authorList>
    </citation>
    <scope>PROTEIN SEQUENCE OF 2-11; 33-43; 157-172; 224-236; 253-265; 308-314 AND 342-366</scope>
    <scope>CLEAVAGE OF INITIATOR METHIONINE</scope>
    <scope>IDENTIFICATION BY MASS SPECTROMETRY</scope>
    <source>
        <tissue>Colon carcinoma</tissue>
    </source>
</reference>
<reference key="13">
    <citation type="submission" date="2008-12" db="UniProtKB">
        <authorList>
            <person name="Lubec G."/>
            <person name="Vishwanath V."/>
            <person name="Chen W.-Q."/>
            <person name="Sun Y."/>
        </authorList>
    </citation>
    <scope>PROTEIN SEQUENCE OF 33-43; 87-96; 108-130; 157-172; 224-236; 253-265; 320-341 AND 359-381</scope>
    <scope>IDENTIFICATION BY MASS SPECTROMETRY</scope>
    <source>
        <tissue>Brain</tissue>
        <tissue>Cajal-Retzius cell</tissue>
        <tissue>Fetal brain cortex</tissue>
    </source>
</reference>
<reference key="14">
    <citation type="journal article" date="1994" name="Biochim. Biophys. Acta">
        <title>Determination of the catalytic site of creatine kinase by site-directed mutagenesis.</title>
        <authorList>
            <person name="Lin L."/>
            <person name="Perryman M.B."/>
            <person name="Friedman D."/>
            <person name="Roberts R."/>
            <person name="Ma T.S."/>
        </authorList>
    </citation>
    <scope>FUNCTION</scope>
    <scope>CATALYTIC ACTIVITY</scope>
    <scope>MUTAGENESIS OF CYS-283; ARG-292 AND ASP-340</scope>
</reference>
<reference key="15">
    <citation type="journal article" date="2008" name="Hum. Mol. Genet.">
        <title>HMSN/ACC truncation mutations disrupt brain-type creatine kinase-dependant activation of K+/Cl- co-transporter 3.</title>
        <authorList>
            <person name="Salin-Cantegrel A."/>
            <person name="Shekarabi M."/>
            <person name="Holbert S."/>
            <person name="Dion P."/>
            <person name="Rochefort D."/>
            <person name="Laganiere J."/>
            <person name="Dacal S."/>
            <person name="Hince P."/>
            <person name="Karemera L."/>
            <person name="Gaspar C."/>
            <person name="Lapointe J.Y."/>
            <person name="Rouleau G.A."/>
        </authorList>
    </citation>
    <scope>INTERACTION WITH SLC12A6</scope>
    <scope>SUBCELLULAR LOCATION</scope>
</reference>
<reference key="16">
    <citation type="journal article" date="2008" name="Proc. Natl. Acad. Sci. U.S.A.">
        <title>A quantitative atlas of mitotic phosphorylation.</title>
        <authorList>
            <person name="Dephoure N."/>
            <person name="Zhou C."/>
            <person name="Villen J."/>
            <person name="Beausoleil S.A."/>
            <person name="Bakalarski C.E."/>
            <person name="Elledge S.J."/>
            <person name="Gygi S.P."/>
        </authorList>
    </citation>
    <scope>PHOSPHORYLATION [LARGE SCALE ANALYSIS] AT THR-35 AND SER-199</scope>
    <scope>IDENTIFICATION BY MASS SPECTROMETRY [LARGE SCALE ANALYSIS]</scope>
    <source>
        <tissue>Cervix carcinoma</tissue>
    </source>
</reference>
<reference key="17">
    <citation type="journal article" date="2010" name="Sci. Signal.">
        <title>Quantitative phosphoproteomics reveals widespread full phosphorylation site occupancy during mitosis.</title>
        <authorList>
            <person name="Olsen J.V."/>
            <person name="Vermeulen M."/>
            <person name="Santamaria A."/>
            <person name="Kumar C."/>
            <person name="Miller M.L."/>
            <person name="Jensen L.J."/>
            <person name="Gnad F."/>
            <person name="Cox J."/>
            <person name="Jensen T.S."/>
            <person name="Nigg E.A."/>
            <person name="Brunak S."/>
            <person name="Mann M."/>
        </authorList>
    </citation>
    <scope>PHOSPHORYLATION [LARGE SCALE ANALYSIS] AT SER-4</scope>
    <scope>IDENTIFICATION BY MASS SPECTROMETRY [LARGE SCALE ANALYSIS]</scope>
    <source>
        <tissue>Cervix carcinoma</tissue>
    </source>
</reference>
<reference key="18">
    <citation type="journal article" date="2011" name="BMC Syst. Biol.">
        <title>Initial characterization of the human central proteome.</title>
        <authorList>
            <person name="Burkard T.R."/>
            <person name="Planyavsky M."/>
            <person name="Kaupe I."/>
            <person name="Breitwieser F.P."/>
            <person name="Buerckstuemmer T."/>
            <person name="Bennett K.L."/>
            <person name="Superti-Furga G."/>
            <person name="Colinge J."/>
        </authorList>
    </citation>
    <scope>IDENTIFICATION BY MASS SPECTROMETRY [LARGE SCALE ANALYSIS]</scope>
</reference>
<reference key="19">
    <citation type="journal article" date="2012" name="J. Proteome Res.">
        <title>Resveratrol-induced changes of the human adipocyte secretion profile.</title>
        <authorList>
            <person name="Rosenow A."/>
            <person name="Noben J.P."/>
            <person name="Jocken J."/>
            <person name="Kallendrusch S."/>
            <person name="Fischer-Posovszky P."/>
            <person name="Mariman E.C."/>
            <person name="Renes J."/>
        </authorList>
    </citation>
    <scope>IDENTIFICATION BY MASS SPECTROMETRY [LARGE SCALE ANALYSIS]</scope>
</reference>
<reference key="20">
    <citation type="journal article" date="2013" name="J. Proteome Res.">
        <title>Toward a comprehensive characterization of a human cancer cell phosphoproteome.</title>
        <authorList>
            <person name="Zhou H."/>
            <person name="Di Palma S."/>
            <person name="Preisinger C."/>
            <person name="Peng M."/>
            <person name="Polat A.N."/>
            <person name="Heck A.J."/>
            <person name="Mohammed S."/>
        </authorList>
    </citation>
    <scope>PHOSPHORYLATION [LARGE SCALE ANALYSIS] AT SER-4 AND THR-35</scope>
    <scope>IDENTIFICATION BY MASS SPECTROMETRY [LARGE SCALE ANALYSIS]</scope>
    <source>
        <tissue>Cervix carcinoma</tissue>
        <tissue>Erythroleukemia</tissue>
    </source>
</reference>
<reference key="21">
    <citation type="journal article" date="2021" name="Mol. Cell. Proteomics">
        <title>The mechanism of NEDD8 activation of CUL5 Ubiquitin E3 ligases.</title>
        <authorList>
            <person name="Lumpkin R.J."/>
            <person name="Ahmad A.S."/>
            <person name="Blake R."/>
            <person name="Condon C.J."/>
            <person name="Komives E.A."/>
        </authorList>
    </citation>
    <scope>UBIQUITINATION AT LYS-45; LYS-101; LYS-107 AND LYS-381</scope>
</reference>
<reference key="22">
    <citation type="journal article" date="2008" name="FEBS Lett.">
        <title>Structural studies of human brain-type creatine kinase complexed with the ADP-Mg2+-NO3- -creatine transition-state analogue complex.</title>
        <authorList>
            <person name="Bong S.M."/>
            <person name="Moon J.H."/>
            <person name="Nam K.H."/>
            <person name="Lee K.S."/>
            <person name="Chi Y.M."/>
            <person name="Hwang K.Y."/>
        </authorList>
    </citation>
    <scope>X-RAY CRYSTALLOGRAPHY (2.0 ANGSTROMS) IN COMPLEX WITH ADP AND CREATINE</scope>
    <scope>ATP-BINDING SITES</scope>
    <scope>SUBSTRATE-BINDING SITES</scope>
    <scope>SUBUNIT</scope>
</reference>
<reference evidence="18" key="23">
    <citation type="journal article" date="2020" name="Nat. Commun.">
        <title>Structure and dynamics of the ASB9 CUL-RING E3 ligase.</title>
        <authorList>
            <person name="Lumpkin R.J."/>
            <person name="Baker R.W."/>
            <person name="Leschziner A.E."/>
            <person name="Komives E.A."/>
        </authorList>
    </citation>
    <scope>STRUCTURE BY ELECTRON MICROSCOPY (4.10 ANGSTROMS) IN COMPLEX WITH ASB9; ELOB AND ELOC</scope>
</reference>
<gene>
    <name evidence="17" type="primary">CKB</name>
    <name type="synonym">CKBB</name>
</gene>
<accession>P12277</accession>
<accession>A8K236</accession>
<accession>B2R5R4</accession>
<accession>Q2LE07</accession>
<accession>Q6FG40</accession>
<accession>Q9UC66</accession>
<organism>
    <name type="scientific">Homo sapiens</name>
    <name type="common">Human</name>
    <dbReference type="NCBI Taxonomy" id="9606"/>
    <lineage>
        <taxon>Eukaryota</taxon>
        <taxon>Metazoa</taxon>
        <taxon>Chordata</taxon>
        <taxon>Craniata</taxon>
        <taxon>Vertebrata</taxon>
        <taxon>Euteleostomi</taxon>
        <taxon>Mammalia</taxon>
        <taxon>Eutheria</taxon>
        <taxon>Euarchontoglires</taxon>
        <taxon>Primates</taxon>
        <taxon>Haplorrhini</taxon>
        <taxon>Catarrhini</taxon>
        <taxon>Hominidae</taxon>
        <taxon>Homo</taxon>
    </lineage>
</organism>
<dbReference type="EC" id="2.7.3.2" evidence="11"/>
<dbReference type="EMBL" id="M16451">
    <property type="protein sequence ID" value="AAA76851.1"/>
    <property type="molecule type" value="mRNA"/>
</dbReference>
<dbReference type="EMBL" id="M21243">
    <property type="protein sequence ID" value="AAC31758.1"/>
    <property type="molecule type" value="Genomic_DNA"/>
</dbReference>
<dbReference type="EMBL" id="M21237">
    <property type="protein sequence ID" value="AAC31758.1"/>
    <property type="status" value="JOINED"/>
    <property type="molecule type" value="Genomic_DNA"/>
</dbReference>
<dbReference type="EMBL" id="M21238">
    <property type="protein sequence ID" value="AAC31758.1"/>
    <property type="status" value="JOINED"/>
    <property type="molecule type" value="Genomic_DNA"/>
</dbReference>
<dbReference type="EMBL" id="M21239">
    <property type="protein sequence ID" value="AAC31758.1"/>
    <property type="status" value="JOINED"/>
    <property type="molecule type" value="Genomic_DNA"/>
</dbReference>
<dbReference type="EMBL" id="M21240">
    <property type="protein sequence ID" value="AAC31758.1"/>
    <property type="status" value="JOINED"/>
    <property type="molecule type" value="Genomic_DNA"/>
</dbReference>
<dbReference type="EMBL" id="M21241">
    <property type="protein sequence ID" value="AAC31758.1"/>
    <property type="status" value="JOINED"/>
    <property type="molecule type" value="Genomic_DNA"/>
</dbReference>
<dbReference type="EMBL" id="M21242">
    <property type="protein sequence ID" value="AAC31758.1"/>
    <property type="status" value="JOINED"/>
    <property type="molecule type" value="Genomic_DNA"/>
</dbReference>
<dbReference type="EMBL" id="L47647">
    <property type="protein sequence ID" value="AAA76852.1"/>
    <property type="molecule type" value="mRNA"/>
</dbReference>
<dbReference type="EMBL" id="M16364">
    <property type="protein sequence ID" value="AAA76850.1"/>
    <property type="molecule type" value="mRNA"/>
</dbReference>
<dbReference type="EMBL" id="X15334">
    <property type="protein sequence ID" value="CAA33389.1"/>
    <property type="molecule type" value="Genomic_DNA"/>
</dbReference>
<dbReference type="EMBL" id="AK290101">
    <property type="protein sequence ID" value="BAF82790.1"/>
    <property type="molecule type" value="mRNA"/>
</dbReference>
<dbReference type="EMBL" id="AK312282">
    <property type="protein sequence ID" value="BAG35211.1"/>
    <property type="molecule type" value="mRNA"/>
</dbReference>
<dbReference type="EMBL" id="CR542268">
    <property type="protein sequence ID" value="CAG47064.1"/>
    <property type="molecule type" value="mRNA"/>
</dbReference>
<dbReference type="EMBL" id="DQ333313">
    <property type="protein sequence ID" value="ABC67465.1"/>
    <property type="molecule type" value="Genomic_DNA"/>
</dbReference>
<dbReference type="EMBL" id="CH471061">
    <property type="protein sequence ID" value="EAW81822.1"/>
    <property type="molecule type" value="Genomic_DNA"/>
</dbReference>
<dbReference type="EMBL" id="BC001190">
    <property type="protein sequence ID" value="AAH01190.1"/>
    <property type="molecule type" value="mRNA"/>
</dbReference>
<dbReference type="EMBL" id="BC004914">
    <property type="protein sequence ID" value="AAH04914.1"/>
    <property type="molecule type" value="mRNA"/>
</dbReference>
<dbReference type="EMBL" id="BC008323">
    <property type="protein sequence ID" value="AAH08323.1"/>
    <property type="molecule type" value="mRNA"/>
</dbReference>
<dbReference type="EMBL" id="BC010002">
    <property type="protein sequence ID" value="AAH10002.1"/>
    <property type="molecule type" value="mRNA"/>
</dbReference>
<dbReference type="EMBL" id="BC019259">
    <property type="protein sequence ID" value="AAH19259.1"/>
    <property type="molecule type" value="mRNA"/>
</dbReference>
<dbReference type="EMBL" id="BC019281">
    <property type="protein sequence ID" value="AAH19281.1"/>
    <property type="molecule type" value="mRNA"/>
</dbReference>
<dbReference type="EMBL" id="M22356">
    <property type="protein sequence ID" value="AAA52024.1"/>
    <property type="molecule type" value="Genomic_DNA"/>
</dbReference>
<dbReference type="EMBL" id="M22355">
    <property type="protein sequence ID" value="AAA52024.1"/>
    <property type="status" value="JOINED"/>
    <property type="molecule type" value="Genomic_DNA"/>
</dbReference>
<dbReference type="CCDS" id="CCDS9981.1"/>
<dbReference type="PIR" id="S15935">
    <property type="entry name" value="KIHUCB"/>
</dbReference>
<dbReference type="RefSeq" id="NP_001814.2">
    <property type="nucleotide sequence ID" value="NM_001823.4"/>
</dbReference>
<dbReference type="PDB" id="3B6R">
    <property type="method" value="X-ray"/>
    <property type="resolution" value="2.00 A"/>
    <property type="chains" value="A/B=1-381"/>
</dbReference>
<dbReference type="PDB" id="3DRB">
    <property type="method" value="X-ray"/>
    <property type="resolution" value="2.00 A"/>
    <property type="chains" value="A/B=1-381"/>
</dbReference>
<dbReference type="PDB" id="3DRE">
    <property type="method" value="X-ray"/>
    <property type="resolution" value="2.20 A"/>
    <property type="chains" value="A/B=1-381"/>
</dbReference>
<dbReference type="PDB" id="6V9H">
    <property type="method" value="EM"/>
    <property type="resolution" value="4.10 A"/>
    <property type="chains" value="A/B=1-381"/>
</dbReference>
<dbReference type="PDB" id="7BF1">
    <property type="method" value="X-ray"/>
    <property type="resolution" value="1.24 A"/>
    <property type="chains" value="CCC/DDD=301-318"/>
</dbReference>
<dbReference type="PDB" id="7TUN">
    <property type="method" value="X-ray"/>
    <property type="resolution" value="2.93 A"/>
    <property type="chains" value="A/B=1-381"/>
</dbReference>
<dbReference type="PDBsum" id="3B6R"/>
<dbReference type="PDBsum" id="3DRB"/>
<dbReference type="PDBsum" id="3DRE"/>
<dbReference type="PDBsum" id="6V9H"/>
<dbReference type="PDBsum" id="7BF1"/>
<dbReference type="PDBsum" id="7TUN"/>
<dbReference type="EMDB" id="EMD-21120"/>
<dbReference type="SMR" id="P12277"/>
<dbReference type="BioGRID" id="107572">
    <property type="interactions" value="285"/>
</dbReference>
<dbReference type="CORUM" id="P12277"/>
<dbReference type="DIP" id="DIP-52968N"/>
<dbReference type="FunCoup" id="P12277">
    <property type="interactions" value="1154"/>
</dbReference>
<dbReference type="IntAct" id="P12277">
    <property type="interactions" value="88"/>
</dbReference>
<dbReference type="MINT" id="P12277"/>
<dbReference type="STRING" id="9606.ENSP00000299198"/>
<dbReference type="ChEMBL" id="CHEMBL6049"/>
<dbReference type="DrugBank" id="DB00787">
    <property type="generic name" value="Acyclovir"/>
</dbReference>
<dbReference type="DrugBank" id="DB00148">
    <property type="generic name" value="Creatine"/>
</dbReference>
<dbReference type="DrugBank" id="DB13749">
    <property type="generic name" value="Magnesium gluconate"/>
</dbReference>
<dbReference type="DrugBank" id="DB13191">
    <property type="generic name" value="Phosphocreatine"/>
</dbReference>
<dbReference type="DrugBank" id="DB00300">
    <property type="generic name" value="Tenofovir disoproxil"/>
</dbReference>
<dbReference type="CarbonylDB" id="P12277"/>
<dbReference type="GlyGen" id="P12277">
    <property type="glycosylation" value="1 site, 1 O-linked glycan (1 site)"/>
</dbReference>
<dbReference type="iPTMnet" id="P12277"/>
<dbReference type="PhosphoSitePlus" id="P12277"/>
<dbReference type="SwissPalm" id="P12277"/>
<dbReference type="BioMuta" id="CKB"/>
<dbReference type="DMDM" id="125294"/>
<dbReference type="REPRODUCTION-2DPAGE" id="IPI00022977"/>
<dbReference type="REPRODUCTION-2DPAGE" id="P12277"/>
<dbReference type="CPTAC" id="CPTAC-476"/>
<dbReference type="CPTAC" id="CPTAC-477"/>
<dbReference type="jPOST" id="P12277"/>
<dbReference type="MassIVE" id="P12277"/>
<dbReference type="PaxDb" id="9606-ENSP00000299198"/>
<dbReference type="PeptideAtlas" id="P12277"/>
<dbReference type="ProteomicsDB" id="52846"/>
<dbReference type="Pumba" id="P12277"/>
<dbReference type="TopDownProteomics" id="P12277"/>
<dbReference type="Antibodypedia" id="28">
    <property type="antibodies" value="892 antibodies from 38 providers"/>
</dbReference>
<dbReference type="CPTC" id="P12277">
    <property type="antibodies" value="3 antibodies"/>
</dbReference>
<dbReference type="DNASU" id="1152"/>
<dbReference type="Ensembl" id="ENST00000348956.7">
    <property type="protein sequence ID" value="ENSP00000299198.2"/>
    <property type="gene ID" value="ENSG00000166165.14"/>
</dbReference>
<dbReference type="GeneID" id="1152"/>
<dbReference type="KEGG" id="hsa:1152"/>
<dbReference type="MANE-Select" id="ENST00000348956.7">
    <property type="protein sequence ID" value="ENSP00000299198.2"/>
    <property type="RefSeq nucleotide sequence ID" value="NM_001823.5"/>
    <property type="RefSeq protein sequence ID" value="NP_001814.2"/>
</dbReference>
<dbReference type="AGR" id="HGNC:1991"/>
<dbReference type="CTD" id="1152"/>
<dbReference type="DisGeNET" id="1152"/>
<dbReference type="GeneCards" id="CKB"/>
<dbReference type="HGNC" id="HGNC:1991">
    <property type="gene designation" value="CKB"/>
</dbReference>
<dbReference type="HPA" id="ENSG00000166165">
    <property type="expression patterns" value="Tissue enhanced (brain)"/>
</dbReference>
<dbReference type="MIM" id="123280">
    <property type="type" value="gene"/>
</dbReference>
<dbReference type="neXtProt" id="NX_P12277"/>
<dbReference type="OpenTargets" id="ENSG00000166165"/>
<dbReference type="PharmGKB" id="PA26528"/>
<dbReference type="VEuPathDB" id="HostDB:ENSG00000166165"/>
<dbReference type="eggNOG" id="KOG3581">
    <property type="taxonomic scope" value="Eukaryota"/>
</dbReference>
<dbReference type="GeneTree" id="ENSGT00950000182772"/>
<dbReference type="HOGENOM" id="CLU_019868_4_2_1"/>
<dbReference type="InParanoid" id="P12277"/>
<dbReference type="OMA" id="HMRVIAM"/>
<dbReference type="OrthoDB" id="430219at2759"/>
<dbReference type="PAN-GO" id="P12277">
    <property type="GO annotations" value="3 GO annotations based on evolutionary models"/>
</dbReference>
<dbReference type="PhylomeDB" id="P12277"/>
<dbReference type="TreeFam" id="TF314214"/>
<dbReference type="BioCyc" id="MetaCyc:HS09344-MONOMER"/>
<dbReference type="BRENDA" id="2.7.3.2">
    <property type="organism ID" value="2681"/>
</dbReference>
<dbReference type="PathwayCommons" id="P12277"/>
<dbReference type="Reactome" id="R-HSA-71288">
    <property type="pathway name" value="Creatine metabolism"/>
</dbReference>
<dbReference type="Reactome" id="R-HSA-9696264">
    <property type="pathway name" value="RND3 GTPase cycle"/>
</dbReference>
<dbReference type="SABIO-RK" id="P12277"/>
<dbReference type="SignaLink" id="P12277"/>
<dbReference type="SIGNOR" id="P12277"/>
<dbReference type="BioGRID-ORCS" id="1152">
    <property type="hits" value="5 hits in 1161 CRISPR screens"/>
</dbReference>
<dbReference type="CD-CODE" id="FB4E32DD">
    <property type="entry name" value="Presynaptic clusters and postsynaptic densities"/>
</dbReference>
<dbReference type="ChiTaRS" id="CKB">
    <property type="organism name" value="human"/>
</dbReference>
<dbReference type="EvolutionaryTrace" id="P12277"/>
<dbReference type="GeneWiki" id="CKB_(gene)"/>
<dbReference type="GenomeRNAi" id="1152"/>
<dbReference type="Pharos" id="P12277">
    <property type="development level" value="Tbio"/>
</dbReference>
<dbReference type="PRO" id="PR:P12277"/>
<dbReference type="Proteomes" id="UP000005640">
    <property type="component" value="Chromosome 14"/>
</dbReference>
<dbReference type="RNAct" id="P12277">
    <property type="molecule type" value="protein"/>
</dbReference>
<dbReference type="Bgee" id="ENSG00000166165">
    <property type="expression patterns" value="Expressed in right hemisphere of cerebellum and 200 other cell types or tissues"/>
</dbReference>
<dbReference type="ExpressionAtlas" id="P12277">
    <property type="expression patterns" value="baseline and differential"/>
</dbReference>
<dbReference type="GO" id="GO:0005829">
    <property type="term" value="C:cytosol"/>
    <property type="evidence" value="ECO:0000314"/>
    <property type="project" value="HPA"/>
</dbReference>
<dbReference type="GO" id="GO:0070062">
    <property type="term" value="C:extracellular exosome"/>
    <property type="evidence" value="ECO:0007005"/>
    <property type="project" value="UniProtKB"/>
</dbReference>
<dbReference type="GO" id="GO:0005615">
    <property type="term" value="C:extracellular space"/>
    <property type="evidence" value="ECO:0000250"/>
    <property type="project" value="AgBase"/>
</dbReference>
<dbReference type="GO" id="GO:0005739">
    <property type="term" value="C:mitochondrion"/>
    <property type="evidence" value="ECO:0000250"/>
    <property type="project" value="UniProtKB"/>
</dbReference>
<dbReference type="GO" id="GO:0005886">
    <property type="term" value="C:plasma membrane"/>
    <property type="evidence" value="ECO:0007669"/>
    <property type="project" value="UniProtKB-SubCell"/>
</dbReference>
<dbReference type="GO" id="GO:0005524">
    <property type="term" value="F:ATP binding"/>
    <property type="evidence" value="ECO:0007669"/>
    <property type="project" value="UniProtKB-KW"/>
</dbReference>
<dbReference type="GO" id="GO:0004111">
    <property type="term" value="F:creatine kinase activity"/>
    <property type="evidence" value="ECO:0000314"/>
    <property type="project" value="UniProt"/>
</dbReference>
<dbReference type="GO" id="GO:0031625">
    <property type="term" value="F:ubiquitin protein ligase binding"/>
    <property type="evidence" value="ECO:0000353"/>
    <property type="project" value="ParkinsonsUK-UCL"/>
</dbReference>
<dbReference type="GO" id="GO:0140651">
    <property type="term" value="P:futile creatine cycle"/>
    <property type="evidence" value="ECO:0007669"/>
    <property type="project" value="Ensembl"/>
</dbReference>
<dbReference type="GO" id="GO:0046314">
    <property type="term" value="P:phosphocreatine biosynthetic process"/>
    <property type="evidence" value="ECO:0000314"/>
    <property type="project" value="UniProt"/>
</dbReference>
<dbReference type="GO" id="GO:0021762">
    <property type="term" value="P:substantia nigra development"/>
    <property type="evidence" value="ECO:0007007"/>
    <property type="project" value="UniProtKB"/>
</dbReference>
<dbReference type="CDD" id="cd00716">
    <property type="entry name" value="creatine_kinase_like"/>
    <property type="match status" value="1"/>
</dbReference>
<dbReference type="FunFam" id="3.30.590.10:FF:000026">
    <property type="entry name" value="Creatine kinase B-type"/>
    <property type="match status" value="1"/>
</dbReference>
<dbReference type="FunFam" id="1.10.135.10:FF:000001">
    <property type="entry name" value="Creatine kinase M-type"/>
    <property type="match status" value="1"/>
</dbReference>
<dbReference type="Gene3D" id="1.10.135.10">
    <property type="entry name" value="ATP:guanido phosphotransferase, N-terminal domain"/>
    <property type="match status" value="1"/>
</dbReference>
<dbReference type="Gene3D" id="3.30.590.10">
    <property type="entry name" value="Glutamine synthetase/guanido kinase, catalytic domain"/>
    <property type="match status" value="1"/>
</dbReference>
<dbReference type="InterPro" id="IPR000749">
    <property type="entry name" value="ATP-guanido_PTrfase"/>
</dbReference>
<dbReference type="InterPro" id="IPR022415">
    <property type="entry name" value="ATP-guanido_PTrfase_AS"/>
</dbReference>
<dbReference type="InterPro" id="IPR022414">
    <property type="entry name" value="ATP-guanido_PTrfase_cat"/>
</dbReference>
<dbReference type="InterPro" id="IPR022413">
    <property type="entry name" value="ATP-guanido_PTrfase_N"/>
</dbReference>
<dbReference type="InterPro" id="IPR036802">
    <property type="entry name" value="ATP-guanido_PTrfase_N_sf"/>
</dbReference>
<dbReference type="InterPro" id="IPR014746">
    <property type="entry name" value="Gln_synth/guanido_kin_cat_dom"/>
</dbReference>
<dbReference type="PANTHER" id="PTHR11547">
    <property type="entry name" value="ARGININE OR CREATINE KINASE"/>
    <property type="match status" value="1"/>
</dbReference>
<dbReference type="PANTHER" id="PTHR11547:SF23">
    <property type="entry name" value="CREATINE KINASE B-TYPE"/>
    <property type="match status" value="1"/>
</dbReference>
<dbReference type="Pfam" id="PF00217">
    <property type="entry name" value="ATP-gua_Ptrans"/>
    <property type="match status" value="1"/>
</dbReference>
<dbReference type="Pfam" id="PF02807">
    <property type="entry name" value="ATP-gua_PtransN"/>
    <property type="match status" value="1"/>
</dbReference>
<dbReference type="SUPFAM" id="SSF55931">
    <property type="entry name" value="Glutamine synthetase/guanido kinase"/>
    <property type="match status" value="1"/>
</dbReference>
<dbReference type="SUPFAM" id="SSF48034">
    <property type="entry name" value="Guanido kinase N-terminal domain"/>
    <property type="match status" value="1"/>
</dbReference>
<dbReference type="PROSITE" id="PS00112">
    <property type="entry name" value="PHOSPHAGEN_KINASE"/>
    <property type="match status" value="1"/>
</dbReference>
<dbReference type="PROSITE" id="PS51510">
    <property type="entry name" value="PHOSPHAGEN_KINASE_C"/>
    <property type="match status" value="1"/>
</dbReference>
<dbReference type="PROSITE" id="PS51509">
    <property type="entry name" value="PHOSPHAGEN_KINASE_N"/>
    <property type="match status" value="1"/>
</dbReference>
<proteinExistence type="evidence at protein level"/>
<keyword id="KW-0002">3D-structure</keyword>
<keyword id="KW-0067">ATP-binding</keyword>
<keyword id="KW-1003">Cell membrane</keyword>
<keyword id="KW-0963">Cytoplasm</keyword>
<keyword id="KW-0903">Direct protein sequencing</keyword>
<keyword id="KW-1017">Isopeptide bond</keyword>
<keyword id="KW-0418">Kinase</keyword>
<keyword id="KW-0472">Membrane</keyword>
<keyword id="KW-0496">Mitochondrion</keyword>
<keyword id="KW-0944">Nitration</keyword>
<keyword id="KW-0547">Nucleotide-binding</keyword>
<keyword id="KW-0597">Phosphoprotein</keyword>
<keyword id="KW-1267">Proteomics identification</keyword>
<keyword id="KW-1185">Reference proteome</keyword>
<keyword id="KW-0808">Transferase</keyword>
<keyword id="KW-0832">Ubl conjugation</keyword>
<comment type="function">
    <text evidence="2 11 16">Reversibly catalyzes the transfer of phosphate between ATP and various phosphogens (e.g. creatine phosphate) (PubMed:8186255). Creatine kinase isoenzymes play a central role in energy transduction in tissues with large, fluctuating energy demands, such as skeletal muscle, heart, brain and spermatozoa (Probable). Acts as a key regulator of adaptive thermogenesis as part of the futile creatine cycle: localizes to the mitochondria of thermogenic fat cells and acts by mediating phosphorylation of creatine to initiate a futile cycle of creatine phosphorylation and dephosphorylation (By similarity). During the futile creatine cycle, creatine and N-phosphocreatine are in a futile cycle, which dissipates the high energy charge of N-phosphocreatine as heat without performing any mechanical or chemical work (By similarity).</text>
</comment>
<comment type="catalytic activity">
    <reaction evidence="5 11">
        <text>creatine + ATP = N-phosphocreatine + ADP + H(+)</text>
        <dbReference type="Rhea" id="RHEA:17157"/>
        <dbReference type="ChEBI" id="CHEBI:15378"/>
        <dbReference type="ChEBI" id="CHEBI:30616"/>
        <dbReference type="ChEBI" id="CHEBI:57947"/>
        <dbReference type="ChEBI" id="CHEBI:58092"/>
        <dbReference type="ChEBI" id="CHEBI:456216"/>
        <dbReference type="EC" id="2.7.3.2"/>
    </reaction>
    <physiologicalReaction direction="left-to-right" evidence="11">
        <dbReference type="Rhea" id="RHEA:17158"/>
    </physiologicalReaction>
</comment>
<comment type="subunit">
    <text evidence="7 8">Dimer of identical or non-identical chains, which can be either B (brain type) or M (muscle type). With MM being the major form in skeletal muscle and myocardium, MB existing in myocardium, and BB existing in many tissues, especially brain. Interacts with SLC12A6 (via C-terminus); the interaction may be required for SLC12A6 potassium-chloride cotransport activity (PubMed:18566107).</text>
</comment>
<comment type="interaction">
    <interactant intactId="EBI-357706">
        <id>P12277</id>
    </interactant>
    <interactant intactId="EBI-745641">
        <id>Q96DX5</id>
        <label>ASB9</label>
    </interactant>
    <organismsDiffer>false</organismsDiffer>
    <experiments>12</experiments>
</comment>
<comment type="interaction">
    <interactant intactId="EBI-357706">
        <id>P12277</id>
    </interactant>
    <interactant intactId="EBI-4287089">
        <id>P06732</id>
        <label>CKM</label>
    </interactant>
    <organismsDiffer>false</organismsDiffer>
    <experiments>3</experiments>
</comment>
<comment type="interaction">
    <interactant intactId="EBI-357706">
        <id>P12277</id>
    </interactant>
    <interactant intactId="EBI-456129">
        <id>Q13618</id>
        <label>CUL3</label>
    </interactant>
    <organismsDiffer>false</organismsDiffer>
    <experiments>3</experiments>
</comment>
<comment type="interaction">
    <interactant intactId="EBI-357706">
        <id>P12277</id>
    </interactant>
    <interactant intactId="EBI-533224">
        <id>P15884</id>
        <label>TCF4</label>
    </interactant>
    <organismsDiffer>false</organismsDiffer>
    <experiments>2</experiments>
</comment>
<comment type="interaction">
    <interactant intactId="EBI-357706">
        <id>P12277</id>
    </interactant>
    <interactant intactId="EBI-9081620">
        <id>PRO_0000278738</id>
        <dbReference type="UniProtKB" id="Q03463"/>
    </interactant>
    <organismsDiffer>true</organismsDiffer>
    <experiments>3</experiments>
</comment>
<comment type="subcellular location">
    <subcellularLocation>
        <location evidence="2">Cytoplasm</location>
        <location evidence="2">Cytosol</location>
    </subcellularLocation>
    <subcellularLocation>
        <location evidence="2">Mitochondrion</location>
    </subcellularLocation>
    <subcellularLocation>
        <location evidence="7">Cell membrane</location>
    </subcellularLocation>
    <text evidence="2">Localizes to the mitochondria of thermogenic fat cells via the internal MTS-like signal (iMTS-L) region.</text>
</comment>
<comment type="domain">
    <text evidence="2">The internal MTS-like signal (iMTS-L) mediates targeting to mitochondria thermogenic fat cells.</text>
</comment>
<comment type="PTM">
    <text evidence="9">Ubiquitinated by the ECS(ASB9) complex, leading to its degradation by the proteasome.</text>
</comment>
<comment type="similarity">
    <text evidence="3 4">Belongs to the ATP:guanido phosphotransferase family.</text>
</comment>
<comment type="online information" name="Wikipedia">
    <link uri="https://en.wikipedia.org/wiki/Creatine_kinase"/>
    <text>Creatine kinase entry</text>
</comment>